<proteinExistence type="inferred from homology"/>
<accession>Q02886</accession>
<dbReference type="EMBL" id="AB001488">
    <property type="protein sequence ID" value="BAA19396.1"/>
    <property type="molecule type" value="Genomic_DNA"/>
</dbReference>
<dbReference type="EMBL" id="AL009126">
    <property type="protein sequence ID" value="CAB12370.1"/>
    <property type="molecule type" value="Genomic_DNA"/>
</dbReference>
<dbReference type="EMBL" id="M64049">
    <property type="protein sequence ID" value="AAA22390.1"/>
    <property type="molecule type" value="Genomic_DNA"/>
</dbReference>
<dbReference type="PIR" id="F69615">
    <property type="entry name" value="F69615"/>
</dbReference>
<dbReference type="RefSeq" id="NP_388444.1">
    <property type="nucleotide sequence ID" value="NC_000964.3"/>
</dbReference>
<dbReference type="RefSeq" id="WP_003234141.1">
    <property type="nucleotide sequence ID" value="NZ_OZ025638.1"/>
</dbReference>
<dbReference type="SMR" id="Q02886"/>
<dbReference type="FunCoup" id="Q02886">
    <property type="interactions" value="6"/>
</dbReference>
<dbReference type="STRING" id="224308.BSU05630"/>
<dbReference type="PaxDb" id="224308-BSU05630"/>
<dbReference type="DNASU" id="938057"/>
<dbReference type="EnsemblBacteria" id="CAB12370">
    <property type="protein sequence ID" value="CAB12370"/>
    <property type="gene ID" value="BSU_05630"/>
</dbReference>
<dbReference type="GeneID" id="938057"/>
<dbReference type="KEGG" id="bsu:BSU05630"/>
<dbReference type="PATRIC" id="fig|224308.179.peg.606"/>
<dbReference type="eggNOG" id="COG2318">
    <property type="taxonomic scope" value="Bacteria"/>
</dbReference>
<dbReference type="InParanoid" id="Q02886"/>
<dbReference type="OrthoDB" id="9811413at2"/>
<dbReference type="PhylomeDB" id="Q02886"/>
<dbReference type="BioCyc" id="BSUB:BSU05630-MONOMER"/>
<dbReference type="Proteomes" id="UP000001570">
    <property type="component" value="Chromosome"/>
</dbReference>
<dbReference type="GO" id="GO:0046872">
    <property type="term" value="F:metal ion binding"/>
    <property type="evidence" value="ECO:0007669"/>
    <property type="project" value="UniProtKB-KW"/>
</dbReference>
<dbReference type="Gene3D" id="1.20.120.450">
    <property type="entry name" value="dinb family like domain"/>
    <property type="match status" value="1"/>
</dbReference>
<dbReference type="InterPro" id="IPR007837">
    <property type="entry name" value="DinB"/>
</dbReference>
<dbReference type="InterPro" id="IPR034660">
    <property type="entry name" value="DinB/YfiT-like"/>
</dbReference>
<dbReference type="PANTHER" id="PTHR37302:SF1">
    <property type="entry name" value="PROTEIN DINB"/>
    <property type="match status" value="1"/>
</dbReference>
<dbReference type="PANTHER" id="PTHR37302">
    <property type="entry name" value="SLR1116 PROTEIN"/>
    <property type="match status" value="1"/>
</dbReference>
<dbReference type="Pfam" id="PF05163">
    <property type="entry name" value="DinB"/>
    <property type="match status" value="1"/>
</dbReference>
<dbReference type="SUPFAM" id="SSF109854">
    <property type="entry name" value="DinB/YfiT-like putative metalloenzymes"/>
    <property type="match status" value="1"/>
</dbReference>
<name>DINB_BACSU</name>
<protein>
    <recommendedName>
        <fullName>Protein DinB</fullName>
    </recommendedName>
</protein>
<organism>
    <name type="scientific">Bacillus subtilis (strain 168)</name>
    <dbReference type="NCBI Taxonomy" id="224308"/>
    <lineage>
        <taxon>Bacteria</taxon>
        <taxon>Bacillati</taxon>
        <taxon>Bacillota</taxon>
        <taxon>Bacilli</taxon>
        <taxon>Bacillales</taxon>
        <taxon>Bacillaceae</taxon>
        <taxon>Bacillus</taxon>
    </lineage>
</organism>
<feature type="chain" id="PRO_0000079901" description="Protein DinB">
    <location>
        <begin position="1"/>
        <end position="172"/>
    </location>
</feature>
<feature type="binding site" evidence="1">
    <location>
        <position position="48"/>
    </location>
    <ligand>
        <name>a divalent metal cation</name>
        <dbReference type="ChEBI" id="CHEBI:60240"/>
    </ligand>
</feature>
<feature type="binding site" evidence="1">
    <location>
        <position position="136"/>
    </location>
    <ligand>
        <name>a divalent metal cation</name>
        <dbReference type="ChEBI" id="CHEBI:60240"/>
    </ligand>
</feature>
<feature type="binding site" evidence="1">
    <location>
        <position position="140"/>
    </location>
    <ligand>
        <name>a divalent metal cation</name>
        <dbReference type="ChEBI" id="CHEBI:60240"/>
    </ligand>
</feature>
<gene>
    <name type="primary">dinB</name>
    <name type="ordered locus">BSU05630</name>
</gene>
<evidence type="ECO:0000250" key="1"/>
<evidence type="ECO:0000305" key="2"/>
<keyword id="KW-0479">Metal-binding</keyword>
<keyword id="KW-1185">Reference proteome</keyword>
<sequence length="172" mass="19904">MSDFAFKLYEYNVWANQQIFNRLKELPKEIYHQEIQSVFPSISHVLSHVYLSDLGWIEVFSGKTLSDALALAEQLKEQTEAKEIEEMEDLFLRLSERYILFLQQKEQLNKPLQIQNPSSGIMKTTVSELLPHVVNHGTYHRGNITAMLRQAGYASAPTDYGLYLFMTKTEKA</sequence>
<comment type="subunit">
    <text evidence="2">Homodimer.</text>
</comment>
<comment type="similarity">
    <text evidence="2">Belongs to the DinB family.</text>
</comment>
<reference key="1">
    <citation type="submission" date="1997-03" db="EMBL/GenBank/DDBJ databases">
        <title>A 148 kbp sequence of the region between 35 and 47 degree of the Bacillus subtilis genome.</title>
        <authorList>
            <person name="Kasahara Y."/>
            <person name="Nakai S."/>
            <person name="Lee S."/>
            <person name="Sadaie Y."/>
            <person name="Ogasawara N."/>
        </authorList>
    </citation>
    <scope>NUCLEOTIDE SEQUENCE [GENOMIC DNA]</scope>
    <source>
        <strain>168</strain>
    </source>
</reference>
<reference key="2">
    <citation type="journal article" date="1997" name="Nature">
        <title>The complete genome sequence of the Gram-positive bacterium Bacillus subtilis.</title>
        <authorList>
            <person name="Kunst F."/>
            <person name="Ogasawara N."/>
            <person name="Moszer I."/>
            <person name="Albertini A.M."/>
            <person name="Alloni G."/>
            <person name="Azevedo V."/>
            <person name="Bertero M.G."/>
            <person name="Bessieres P."/>
            <person name="Bolotin A."/>
            <person name="Borchert S."/>
            <person name="Borriss R."/>
            <person name="Boursier L."/>
            <person name="Brans A."/>
            <person name="Braun M."/>
            <person name="Brignell S.C."/>
            <person name="Bron S."/>
            <person name="Brouillet S."/>
            <person name="Bruschi C.V."/>
            <person name="Caldwell B."/>
            <person name="Capuano V."/>
            <person name="Carter N.M."/>
            <person name="Choi S.-K."/>
            <person name="Codani J.-J."/>
            <person name="Connerton I.F."/>
            <person name="Cummings N.J."/>
            <person name="Daniel R.A."/>
            <person name="Denizot F."/>
            <person name="Devine K.M."/>
            <person name="Duesterhoeft A."/>
            <person name="Ehrlich S.D."/>
            <person name="Emmerson P.T."/>
            <person name="Entian K.-D."/>
            <person name="Errington J."/>
            <person name="Fabret C."/>
            <person name="Ferrari E."/>
            <person name="Foulger D."/>
            <person name="Fritz C."/>
            <person name="Fujita M."/>
            <person name="Fujita Y."/>
            <person name="Fuma S."/>
            <person name="Galizzi A."/>
            <person name="Galleron N."/>
            <person name="Ghim S.-Y."/>
            <person name="Glaser P."/>
            <person name="Goffeau A."/>
            <person name="Golightly E.J."/>
            <person name="Grandi G."/>
            <person name="Guiseppi G."/>
            <person name="Guy B.J."/>
            <person name="Haga K."/>
            <person name="Haiech J."/>
            <person name="Harwood C.R."/>
            <person name="Henaut A."/>
            <person name="Hilbert H."/>
            <person name="Holsappel S."/>
            <person name="Hosono S."/>
            <person name="Hullo M.-F."/>
            <person name="Itaya M."/>
            <person name="Jones L.-M."/>
            <person name="Joris B."/>
            <person name="Karamata D."/>
            <person name="Kasahara Y."/>
            <person name="Klaerr-Blanchard M."/>
            <person name="Klein C."/>
            <person name="Kobayashi Y."/>
            <person name="Koetter P."/>
            <person name="Koningstein G."/>
            <person name="Krogh S."/>
            <person name="Kumano M."/>
            <person name="Kurita K."/>
            <person name="Lapidus A."/>
            <person name="Lardinois S."/>
            <person name="Lauber J."/>
            <person name="Lazarevic V."/>
            <person name="Lee S.-M."/>
            <person name="Levine A."/>
            <person name="Liu H."/>
            <person name="Masuda S."/>
            <person name="Mauel C."/>
            <person name="Medigue C."/>
            <person name="Medina N."/>
            <person name="Mellado R.P."/>
            <person name="Mizuno M."/>
            <person name="Moestl D."/>
            <person name="Nakai S."/>
            <person name="Noback M."/>
            <person name="Noone D."/>
            <person name="O'Reilly M."/>
            <person name="Ogawa K."/>
            <person name="Ogiwara A."/>
            <person name="Oudega B."/>
            <person name="Park S.-H."/>
            <person name="Parro V."/>
            <person name="Pohl T.M."/>
            <person name="Portetelle D."/>
            <person name="Porwollik S."/>
            <person name="Prescott A.M."/>
            <person name="Presecan E."/>
            <person name="Pujic P."/>
            <person name="Purnelle B."/>
            <person name="Rapoport G."/>
            <person name="Rey M."/>
            <person name="Reynolds S."/>
            <person name="Rieger M."/>
            <person name="Rivolta C."/>
            <person name="Rocha E."/>
            <person name="Roche B."/>
            <person name="Rose M."/>
            <person name="Sadaie Y."/>
            <person name="Sato T."/>
            <person name="Scanlan E."/>
            <person name="Schleich S."/>
            <person name="Schroeter R."/>
            <person name="Scoffone F."/>
            <person name="Sekiguchi J."/>
            <person name="Sekowska A."/>
            <person name="Seror S.J."/>
            <person name="Serror P."/>
            <person name="Shin B.-S."/>
            <person name="Soldo B."/>
            <person name="Sorokin A."/>
            <person name="Tacconi E."/>
            <person name="Takagi T."/>
            <person name="Takahashi H."/>
            <person name="Takemaru K."/>
            <person name="Takeuchi M."/>
            <person name="Tamakoshi A."/>
            <person name="Tanaka T."/>
            <person name="Terpstra P."/>
            <person name="Tognoni A."/>
            <person name="Tosato V."/>
            <person name="Uchiyama S."/>
            <person name="Vandenbol M."/>
            <person name="Vannier F."/>
            <person name="Vassarotti A."/>
            <person name="Viari A."/>
            <person name="Wambutt R."/>
            <person name="Wedler E."/>
            <person name="Wedler H."/>
            <person name="Weitzenegger T."/>
            <person name="Winters P."/>
            <person name="Wipat A."/>
            <person name="Yamamoto H."/>
            <person name="Yamane K."/>
            <person name="Yasumoto K."/>
            <person name="Yata K."/>
            <person name="Yoshida K."/>
            <person name="Yoshikawa H.-F."/>
            <person name="Zumstein E."/>
            <person name="Yoshikawa H."/>
            <person name="Danchin A."/>
        </authorList>
    </citation>
    <scope>NUCLEOTIDE SEQUENCE [LARGE SCALE GENOMIC DNA]</scope>
    <source>
        <strain>168</strain>
    </source>
</reference>
<reference key="3">
    <citation type="journal article" date="1991" name="J. Bacteriol.">
        <title>Cloning and characterization of DNA damage-inducible promoter regions from Bacillus subtilis.</title>
        <authorList>
            <person name="Cheo D.L."/>
            <person name="Bayles K.W."/>
            <person name="Yasbin R.E."/>
        </authorList>
    </citation>
    <scope>NUCLEOTIDE SEQUENCE [GENOMIC DNA] OF 1-28</scope>
</reference>